<accession>Q64365</accession>
<dbReference type="EMBL" id="D14118">
    <property type="protein sequence ID" value="BAA03181.1"/>
    <property type="molecule type" value="mRNA"/>
</dbReference>
<dbReference type="EMBL" id="D37972">
    <property type="protein sequence ID" value="BAA07190.1"/>
    <property type="molecule type" value="Genomic_DNA"/>
</dbReference>
<dbReference type="EMBL" id="D14120">
    <property type="protein sequence ID" value="BAA03183.1"/>
    <property type="molecule type" value="Genomic_DNA"/>
</dbReference>
<dbReference type="RefSeq" id="NP_001166528.1">
    <property type="nucleotide sequence ID" value="NM_001173057.1"/>
</dbReference>
<dbReference type="SMR" id="Q64365"/>
<dbReference type="FunCoup" id="Q64365">
    <property type="interactions" value="24"/>
</dbReference>
<dbReference type="GeneID" id="100192401"/>
<dbReference type="KEGG" id="cpoc:100192401"/>
<dbReference type="CTD" id="100192401"/>
<dbReference type="InParanoid" id="Q64365"/>
<dbReference type="OrthoDB" id="9837636at2759"/>
<dbReference type="Proteomes" id="UP000005447">
    <property type="component" value="Unassembled WGS sequence"/>
</dbReference>
<dbReference type="GO" id="GO:0031012">
    <property type="term" value="C:extracellular matrix"/>
    <property type="evidence" value="ECO:0007669"/>
    <property type="project" value="TreeGrafter"/>
</dbReference>
<dbReference type="GO" id="GO:0005615">
    <property type="term" value="C:extracellular space"/>
    <property type="evidence" value="ECO:0007669"/>
    <property type="project" value="InterPro"/>
</dbReference>
<dbReference type="GO" id="GO:0019731">
    <property type="term" value="P:antibacterial humoral response"/>
    <property type="evidence" value="ECO:0007669"/>
    <property type="project" value="TreeGrafter"/>
</dbReference>
<dbReference type="GO" id="GO:0061844">
    <property type="term" value="P:antimicrobial humoral immune response mediated by antimicrobial peptide"/>
    <property type="evidence" value="ECO:0007669"/>
    <property type="project" value="TreeGrafter"/>
</dbReference>
<dbReference type="GO" id="GO:0071222">
    <property type="term" value="P:cellular response to lipopolysaccharide"/>
    <property type="evidence" value="ECO:0007669"/>
    <property type="project" value="TreeGrafter"/>
</dbReference>
<dbReference type="GO" id="GO:0050832">
    <property type="term" value="P:defense response to fungus"/>
    <property type="evidence" value="ECO:0007669"/>
    <property type="project" value="UniProtKB-KW"/>
</dbReference>
<dbReference type="GO" id="GO:0050829">
    <property type="term" value="P:defense response to Gram-negative bacterium"/>
    <property type="evidence" value="ECO:0007669"/>
    <property type="project" value="TreeGrafter"/>
</dbReference>
<dbReference type="GO" id="GO:0050830">
    <property type="term" value="P:defense response to Gram-positive bacterium"/>
    <property type="evidence" value="ECO:0007669"/>
    <property type="project" value="TreeGrafter"/>
</dbReference>
<dbReference type="GO" id="GO:0051607">
    <property type="term" value="P:defense response to virus"/>
    <property type="evidence" value="ECO:0007669"/>
    <property type="project" value="UniProtKB-KW"/>
</dbReference>
<dbReference type="GO" id="GO:0051673">
    <property type="term" value="P:disruption of plasma membrane integrity in another organism"/>
    <property type="evidence" value="ECO:0007669"/>
    <property type="project" value="TreeGrafter"/>
</dbReference>
<dbReference type="GO" id="GO:0002227">
    <property type="term" value="P:innate immune response in mucosa"/>
    <property type="evidence" value="ECO:0007669"/>
    <property type="project" value="TreeGrafter"/>
</dbReference>
<dbReference type="GO" id="GO:0031640">
    <property type="term" value="P:killing of cells of another organism"/>
    <property type="evidence" value="ECO:0007669"/>
    <property type="project" value="UniProtKB-KW"/>
</dbReference>
<dbReference type="InterPro" id="IPR016327">
    <property type="entry name" value="Alpha-defensin"/>
</dbReference>
<dbReference type="InterPro" id="IPR006081">
    <property type="entry name" value="Alpha-defensin_C"/>
</dbReference>
<dbReference type="InterPro" id="IPR002366">
    <property type="entry name" value="Alpha-defensin_N"/>
</dbReference>
<dbReference type="InterPro" id="IPR006080">
    <property type="entry name" value="Beta/alpha-defensin_C"/>
</dbReference>
<dbReference type="PANTHER" id="PTHR11876">
    <property type="entry name" value="ALPHA-DEFENSIN 1"/>
    <property type="match status" value="1"/>
</dbReference>
<dbReference type="PANTHER" id="PTHR11876:SF28">
    <property type="entry name" value="ALPHA-DEFENSIN 1"/>
    <property type="match status" value="1"/>
</dbReference>
<dbReference type="Pfam" id="PF00323">
    <property type="entry name" value="Defensin_1"/>
    <property type="match status" value="1"/>
</dbReference>
<dbReference type="Pfam" id="PF00879">
    <property type="entry name" value="Defensin_propep"/>
    <property type="match status" value="1"/>
</dbReference>
<dbReference type="PIRSF" id="PIRSF001875">
    <property type="entry name" value="Alpha-defensin"/>
    <property type="match status" value="1"/>
</dbReference>
<dbReference type="SMART" id="SM01418">
    <property type="entry name" value="Defensin_propep"/>
    <property type="match status" value="1"/>
</dbReference>
<dbReference type="SMART" id="SM00048">
    <property type="entry name" value="DEFSN"/>
    <property type="match status" value="1"/>
</dbReference>
<dbReference type="PROSITE" id="PS00269">
    <property type="entry name" value="DEFENSIN"/>
    <property type="match status" value="1"/>
</dbReference>
<evidence type="ECO:0000250" key="1"/>
<evidence type="ECO:0000255" key="2"/>
<evidence type="ECO:0000269" key="3">
    <source>
    </source>
</evidence>
<evidence type="ECO:0000269" key="4">
    <source>
    </source>
</evidence>
<evidence type="ECO:0000269" key="5">
    <source>
    </source>
</evidence>
<evidence type="ECO:0000305" key="6"/>
<feature type="signal peptide" evidence="2">
    <location>
        <begin position="1"/>
        <end position="19"/>
    </location>
</feature>
<feature type="propeptide" id="PRO_0000006767" evidence="3 4 5">
    <location>
        <begin position="20"/>
        <end position="62"/>
    </location>
</feature>
<feature type="peptide" id="PRO_0000006768" description="Neutrophil cationic peptide 1">
    <location>
        <begin position="63"/>
        <end position="93"/>
    </location>
</feature>
<feature type="disulfide bond" evidence="1">
    <location>
        <begin position="65"/>
        <end position="93"/>
    </location>
</feature>
<feature type="disulfide bond" evidence="1">
    <location>
        <begin position="67"/>
        <end position="82"/>
    </location>
</feature>
<feature type="disulfide bond" evidence="1">
    <location>
        <begin position="72"/>
        <end position="92"/>
    </location>
</feature>
<reference key="1">
    <citation type="journal article" date="1993" name="Comp. Biochem. Physiol.">
        <title>Guinea-pig neutrophil cationic peptides are encoded by at least three kinds of mRNA transcripts.</title>
        <authorList>
            <person name="Nagaoka I."/>
            <person name="Nonoguchi A."/>
            <person name="Yamashita T."/>
        </authorList>
    </citation>
    <scope>NUCLEOTIDE SEQUENCE [MRNA]</scope>
    <source>
        <strain>Hartley</strain>
        <tissue>Bone marrow</tissue>
    </source>
</reference>
<reference key="2">
    <citation type="journal article" date="1993" name="DNA Seq.">
        <title>Cloning and characterization of the guinea pig neutrophil cationic peptide-1 and -2 genes.</title>
        <authorList>
            <person name="Nagaoka I."/>
            <person name="Nonoguchi A."/>
            <person name="Yamashita T."/>
        </authorList>
    </citation>
    <scope>NUCLEOTIDE SEQUENCE [GENOMIC DNA]</scope>
    <source>
        <strain>Hartley</strain>
        <tissue>Liver</tissue>
    </source>
</reference>
<reference key="3">
    <citation type="journal article" date="1987" name="Infect. Immun.">
        <title>Purification, primary structure, and antimicrobial activities of a guinea pig neutrophil defensin.</title>
        <authorList>
            <person name="Selsted M.E."/>
            <person name="Harwig S.S.L."/>
        </authorList>
    </citation>
    <scope>PROTEIN SEQUENCE OF 63-93</scope>
    <source>
        <tissue>Peritoneal neutrophil</tissue>
    </source>
</reference>
<reference key="4">
    <citation type="journal article" date="1991" name="Biochem. Biophys. Res. Commun.">
        <title>Isolation and characterization of corticostatic peptides from guinea pig bone marrow.</title>
        <authorList>
            <person name="Hu J."/>
            <person name="Bennett H.P.J."/>
            <person name="Lazure C."/>
            <person name="Solomon S."/>
        </authorList>
    </citation>
    <scope>PROTEIN SEQUENCE OF 63-93</scope>
    <source>
        <tissue>Bone marrow</tissue>
    </source>
</reference>
<reference key="5">
    <citation type="journal article" date="1989" name="Infect. Immun.">
        <title>Purification, primary structure, and biological activity of guinea pig neutrophil cationic peptides.</title>
        <authorList>
            <person name="Yamashita T."/>
            <person name="Saito K."/>
        </authorList>
    </citation>
    <scope>PROTEIN SEQUENCE OF 63-93</scope>
    <source>
        <tissue>Neutrophil</tissue>
    </source>
</reference>
<proteinExistence type="evidence at protein level"/>
<keyword id="KW-0044">Antibiotic</keyword>
<keyword id="KW-0929">Antimicrobial</keyword>
<keyword id="KW-0051">Antiviral defense</keyword>
<keyword id="KW-0211">Defensin</keyword>
<keyword id="KW-0903">Direct protein sequencing</keyword>
<keyword id="KW-1015">Disulfide bond</keyword>
<keyword id="KW-0295">Fungicide</keyword>
<keyword id="KW-1185">Reference proteome</keyword>
<keyword id="KW-0964">Secreted</keyword>
<keyword id="KW-0732">Signal</keyword>
<comment type="function">
    <text>Has antibiotic, anti-fungi and antiviral activity.</text>
</comment>
<comment type="subcellular location">
    <subcellularLocation>
        <location>Secreted</location>
    </subcellularLocation>
</comment>
<comment type="tissue specificity">
    <text>Bone marrow.</text>
</comment>
<comment type="similarity">
    <text evidence="6">Belongs to the alpha-defensin family.</text>
</comment>
<protein>
    <recommendedName>
        <fullName>Neutrophil cationic peptide 1 type B</fullName>
    </recommendedName>
    <alternativeName>
        <fullName>GNCP-1B</fullName>
    </alternativeName>
    <component>
        <recommendedName>
            <fullName>Neutrophil cationic peptide 1</fullName>
        </recommendedName>
        <alternativeName>
            <fullName>Corticostatic peptide GP-CS1</fullName>
            <shortName>CP-1</shortName>
        </alternativeName>
        <alternativeName>
            <fullName>GPNP</fullName>
        </alternativeName>
        <alternativeName>
            <fullName>Neutrophil defensin</fullName>
        </alternativeName>
    </component>
</protein>
<organism>
    <name type="scientific">Cavia porcellus</name>
    <name type="common">Guinea pig</name>
    <dbReference type="NCBI Taxonomy" id="10141"/>
    <lineage>
        <taxon>Eukaryota</taxon>
        <taxon>Metazoa</taxon>
        <taxon>Chordata</taxon>
        <taxon>Craniata</taxon>
        <taxon>Vertebrata</taxon>
        <taxon>Euteleostomi</taxon>
        <taxon>Mammalia</taxon>
        <taxon>Eutheria</taxon>
        <taxon>Euarchontoglires</taxon>
        <taxon>Glires</taxon>
        <taxon>Rodentia</taxon>
        <taxon>Hystricomorpha</taxon>
        <taxon>Caviidae</taxon>
        <taxon>Cavia</taxon>
    </lineage>
</organism>
<name>DEF1B_CAVPO</name>
<sequence length="93" mass="10478">MRTVPLFAACLLLTLMAQAEPLPRAADHSDTKMKGDREDHVAVISFWEEESTSLQDAGAGAGRRCICTTRTCRFPYRRLGTCIFQNRVYTFCC</sequence>